<comment type="function">
    <text evidence="1">Participates actively in the response to hyperosmotic and heat shock by preventing the aggregation of stress-denatured proteins and by disaggregating proteins, also in an autonomous, DnaK-independent fashion. Unfolded proteins bind initially to DnaJ; upon interaction with the DnaJ-bound protein, DnaK hydrolyzes its bound ATP, resulting in the formation of a stable complex. GrpE releases ADP from DnaK; ATP binding to DnaK triggers the release of the substrate protein, thus completing the reaction cycle. Several rounds of ATP-dependent interactions between DnaJ, DnaK and GrpE are required for fully efficient folding. Also involved, together with DnaK and GrpE, in the DNA replication of plasmids through activation of initiation proteins.</text>
</comment>
<comment type="cofactor">
    <cofactor evidence="1">
        <name>Zn(2+)</name>
        <dbReference type="ChEBI" id="CHEBI:29105"/>
    </cofactor>
    <text evidence="1">Binds 2 Zn(2+) ions per monomer.</text>
</comment>
<comment type="subunit">
    <text evidence="1">Homodimer.</text>
</comment>
<comment type="subcellular location">
    <subcellularLocation>
        <location evidence="1">Cytoplasm</location>
    </subcellularLocation>
</comment>
<comment type="domain">
    <text evidence="1">The J domain is necessary and sufficient to stimulate DnaK ATPase activity. Zinc center 1 plays an important role in the autonomous, DnaK-independent chaperone activity of DnaJ. Zinc center 2 is essential for interaction with DnaK and for DnaJ activity.</text>
</comment>
<comment type="similarity">
    <text evidence="1">Belongs to the DnaJ family.</text>
</comment>
<proteinExistence type="inferred from homology"/>
<organism>
    <name type="scientific">Salmonella agona (strain SL483)</name>
    <dbReference type="NCBI Taxonomy" id="454166"/>
    <lineage>
        <taxon>Bacteria</taxon>
        <taxon>Pseudomonadati</taxon>
        <taxon>Pseudomonadota</taxon>
        <taxon>Gammaproteobacteria</taxon>
        <taxon>Enterobacterales</taxon>
        <taxon>Enterobacteriaceae</taxon>
        <taxon>Salmonella</taxon>
    </lineage>
</organism>
<accession>B5F6Y9</accession>
<gene>
    <name evidence="1" type="primary">dnaJ</name>
    <name type="ordered locus">SeAg_B0014</name>
</gene>
<keyword id="KW-0143">Chaperone</keyword>
<keyword id="KW-0963">Cytoplasm</keyword>
<keyword id="KW-0235">DNA replication</keyword>
<keyword id="KW-0479">Metal-binding</keyword>
<keyword id="KW-0677">Repeat</keyword>
<keyword id="KW-0346">Stress response</keyword>
<keyword id="KW-0862">Zinc</keyword>
<keyword id="KW-0863">Zinc-finger</keyword>
<evidence type="ECO:0000255" key="1">
    <source>
        <dbReference type="HAMAP-Rule" id="MF_01152"/>
    </source>
</evidence>
<protein>
    <recommendedName>
        <fullName evidence="1">Chaperone protein DnaJ</fullName>
    </recommendedName>
</protein>
<dbReference type="EMBL" id="CP001138">
    <property type="protein sequence ID" value="ACH52019.1"/>
    <property type="molecule type" value="Genomic_DNA"/>
</dbReference>
<dbReference type="RefSeq" id="WP_001119009.1">
    <property type="nucleotide sequence ID" value="NC_011149.1"/>
</dbReference>
<dbReference type="SMR" id="B5F6Y9"/>
<dbReference type="KEGG" id="sea:SeAg_B0014"/>
<dbReference type="HOGENOM" id="CLU_017633_0_7_6"/>
<dbReference type="Proteomes" id="UP000008819">
    <property type="component" value="Chromosome"/>
</dbReference>
<dbReference type="GO" id="GO:0005737">
    <property type="term" value="C:cytoplasm"/>
    <property type="evidence" value="ECO:0007669"/>
    <property type="project" value="UniProtKB-SubCell"/>
</dbReference>
<dbReference type="GO" id="GO:0005524">
    <property type="term" value="F:ATP binding"/>
    <property type="evidence" value="ECO:0007669"/>
    <property type="project" value="InterPro"/>
</dbReference>
<dbReference type="GO" id="GO:0031072">
    <property type="term" value="F:heat shock protein binding"/>
    <property type="evidence" value="ECO:0007669"/>
    <property type="project" value="InterPro"/>
</dbReference>
<dbReference type="GO" id="GO:0051082">
    <property type="term" value="F:unfolded protein binding"/>
    <property type="evidence" value="ECO:0007669"/>
    <property type="project" value="UniProtKB-UniRule"/>
</dbReference>
<dbReference type="GO" id="GO:0008270">
    <property type="term" value="F:zinc ion binding"/>
    <property type="evidence" value="ECO:0007669"/>
    <property type="project" value="UniProtKB-UniRule"/>
</dbReference>
<dbReference type="GO" id="GO:0051085">
    <property type="term" value="P:chaperone cofactor-dependent protein refolding"/>
    <property type="evidence" value="ECO:0007669"/>
    <property type="project" value="TreeGrafter"/>
</dbReference>
<dbReference type="GO" id="GO:0006260">
    <property type="term" value="P:DNA replication"/>
    <property type="evidence" value="ECO:0007669"/>
    <property type="project" value="UniProtKB-KW"/>
</dbReference>
<dbReference type="GO" id="GO:0042026">
    <property type="term" value="P:protein refolding"/>
    <property type="evidence" value="ECO:0007669"/>
    <property type="project" value="TreeGrafter"/>
</dbReference>
<dbReference type="GO" id="GO:0009408">
    <property type="term" value="P:response to heat"/>
    <property type="evidence" value="ECO:0007669"/>
    <property type="project" value="InterPro"/>
</dbReference>
<dbReference type="CDD" id="cd06257">
    <property type="entry name" value="DnaJ"/>
    <property type="match status" value="1"/>
</dbReference>
<dbReference type="CDD" id="cd10747">
    <property type="entry name" value="DnaJ_C"/>
    <property type="match status" value="1"/>
</dbReference>
<dbReference type="CDD" id="cd10719">
    <property type="entry name" value="DnaJ_zf"/>
    <property type="match status" value="1"/>
</dbReference>
<dbReference type="FunFam" id="1.10.287.110:FF:000003">
    <property type="entry name" value="Molecular chaperone DnaJ"/>
    <property type="match status" value="1"/>
</dbReference>
<dbReference type="FunFam" id="2.10.230.10:FF:000002">
    <property type="entry name" value="Molecular chaperone DnaJ"/>
    <property type="match status" value="1"/>
</dbReference>
<dbReference type="FunFam" id="2.60.260.20:FF:000004">
    <property type="entry name" value="Molecular chaperone DnaJ"/>
    <property type="match status" value="1"/>
</dbReference>
<dbReference type="Gene3D" id="1.10.287.110">
    <property type="entry name" value="DnaJ domain"/>
    <property type="match status" value="1"/>
</dbReference>
<dbReference type="Gene3D" id="2.10.230.10">
    <property type="entry name" value="Heat shock protein DnaJ, cysteine-rich domain"/>
    <property type="match status" value="1"/>
</dbReference>
<dbReference type="Gene3D" id="2.60.260.20">
    <property type="entry name" value="Urease metallochaperone UreE, N-terminal domain"/>
    <property type="match status" value="2"/>
</dbReference>
<dbReference type="HAMAP" id="MF_01152">
    <property type="entry name" value="DnaJ"/>
    <property type="match status" value="1"/>
</dbReference>
<dbReference type="InterPro" id="IPR012724">
    <property type="entry name" value="DnaJ"/>
</dbReference>
<dbReference type="InterPro" id="IPR002939">
    <property type="entry name" value="DnaJ_C"/>
</dbReference>
<dbReference type="InterPro" id="IPR001623">
    <property type="entry name" value="DnaJ_domain"/>
</dbReference>
<dbReference type="InterPro" id="IPR018253">
    <property type="entry name" value="DnaJ_domain_CS"/>
</dbReference>
<dbReference type="InterPro" id="IPR008971">
    <property type="entry name" value="HSP40/DnaJ_pept-bd"/>
</dbReference>
<dbReference type="InterPro" id="IPR001305">
    <property type="entry name" value="HSP_DnaJ_Cys-rich_dom"/>
</dbReference>
<dbReference type="InterPro" id="IPR036410">
    <property type="entry name" value="HSP_DnaJ_Cys-rich_dom_sf"/>
</dbReference>
<dbReference type="InterPro" id="IPR036869">
    <property type="entry name" value="J_dom_sf"/>
</dbReference>
<dbReference type="NCBIfam" id="TIGR02349">
    <property type="entry name" value="DnaJ_bact"/>
    <property type="match status" value="1"/>
</dbReference>
<dbReference type="NCBIfam" id="NF008035">
    <property type="entry name" value="PRK10767.1"/>
    <property type="match status" value="1"/>
</dbReference>
<dbReference type="PANTHER" id="PTHR43096:SF48">
    <property type="entry name" value="CHAPERONE PROTEIN DNAJ"/>
    <property type="match status" value="1"/>
</dbReference>
<dbReference type="PANTHER" id="PTHR43096">
    <property type="entry name" value="DNAJ HOMOLOG 1, MITOCHONDRIAL-RELATED"/>
    <property type="match status" value="1"/>
</dbReference>
<dbReference type="Pfam" id="PF00226">
    <property type="entry name" value="DnaJ"/>
    <property type="match status" value="1"/>
</dbReference>
<dbReference type="Pfam" id="PF01556">
    <property type="entry name" value="DnaJ_C"/>
    <property type="match status" value="1"/>
</dbReference>
<dbReference type="Pfam" id="PF00684">
    <property type="entry name" value="DnaJ_CXXCXGXG"/>
    <property type="match status" value="1"/>
</dbReference>
<dbReference type="PRINTS" id="PR00625">
    <property type="entry name" value="JDOMAIN"/>
</dbReference>
<dbReference type="SMART" id="SM00271">
    <property type="entry name" value="DnaJ"/>
    <property type="match status" value="1"/>
</dbReference>
<dbReference type="SUPFAM" id="SSF46565">
    <property type="entry name" value="Chaperone J-domain"/>
    <property type="match status" value="1"/>
</dbReference>
<dbReference type="SUPFAM" id="SSF57938">
    <property type="entry name" value="DnaJ/Hsp40 cysteine-rich domain"/>
    <property type="match status" value="1"/>
</dbReference>
<dbReference type="SUPFAM" id="SSF49493">
    <property type="entry name" value="HSP40/DnaJ peptide-binding domain"/>
    <property type="match status" value="2"/>
</dbReference>
<dbReference type="PROSITE" id="PS00636">
    <property type="entry name" value="DNAJ_1"/>
    <property type="match status" value="1"/>
</dbReference>
<dbReference type="PROSITE" id="PS50076">
    <property type="entry name" value="DNAJ_2"/>
    <property type="match status" value="1"/>
</dbReference>
<dbReference type="PROSITE" id="PS51188">
    <property type="entry name" value="ZF_CR"/>
    <property type="match status" value="1"/>
</dbReference>
<reference key="1">
    <citation type="journal article" date="2011" name="J. Bacteriol.">
        <title>Comparative genomics of 28 Salmonella enterica isolates: evidence for CRISPR-mediated adaptive sublineage evolution.</title>
        <authorList>
            <person name="Fricke W.F."/>
            <person name="Mammel M.K."/>
            <person name="McDermott P.F."/>
            <person name="Tartera C."/>
            <person name="White D.G."/>
            <person name="Leclerc J.E."/>
            <person name="Ravel J."/>
            <person name="Cebula T.A."/>
        </authorList>
    </citation>
    <scope>NUCLEOTIDE SEQUENCE [LARGE SCALE GENOMIC DNA]</scope>
    <source>
        <strain>SL483</strain>
    </source>
</reference>
<name>DNAJ_SALA4</name>
<sequence>MAKRDYYEILGVSKTAEEREIKKAYKRLAMKYHPDRNQGDKEAEAKFKEIKEAYEVLTDAQKRAAYDQYGHAAFEQGGMGGGFGGGFNGGADFSDIFGDVFGDIFGGGRGRQRAARGADLRYNMDLTLEEAVRGVTKEIRIPTLEECDVCHGSGAKAGTQPQTCPTCHGSGQVQMRQGFFAVQQTCPHCQGRGTLIKDPCHKCHGHGRVEKSKTLSVKIPAGVDTGDRIRLAGEGEAGEHGAPAGDLYVQVQVKQHPIFEREGNNLYCEVPINFAMAALGGEIEVPTLDGRVMLKVPSETQTGKLFRMRGKGVKSVRGGAQGDLLCRVVVETPVGLSEKQKQLLKDLQESFGGPTGEKNSPRSKSFFDGVKKFFDDLTR</sequence>
<feature type="chain" id="PRO_1000137719" description="Chaperone protein DnaJ">
    <location>
        <begin position="1"/>
        <end position="379"/>
    </location>
</feature>
<feature type="domain" description="J" evidence="1">
    <location>
        <begin position="5"/>
        <end position="70"/>
    </location>
</feature>
<feature type="repeat" description="CXXCXGXG motif">
    <location>
        <begin position="147"/>
        <end position="154"/>
    </location>
</feature>
<feature type="repeat" description="CXXCXGXG motif">
    <location>
        <begin position="164"/>
        <end position="171"/>
    </location>
</feature>
<feature type="repeat" description="CXXCXGXG motif">
    <location>
        <begin position="186"/>
        <end position="193"/>
    </location>
</feature>
<feature type="repeat" description="CXXCXGXG motif">
    <location>
        <begin position="200"/>
        <end position="207"/>
    </location>
</feature>
<feature type="zinc finger region" description="CR-type" evidence="1">
    <location>
        <begin position="134"/>
        <end position="212"/>
    </location>
</feature>
<feature type="binding site" evidence="1">
    <location>
        <position position="147"/>
    </location>
    <ligand>
        <name>Zn(2+)</name>
        <dbReference type="ChEBI" id="CHEBI:29105"/>
        <label>1</label>
    </ligand>
</feature>
<feature type="binding site" evidence="1">
    <location>
        <position position="150"/>
    </location>
    <ligand>
        <name>Zn(2+)</name>
        <dbReference type="ChEBI" id="CHEBI:29105"/>
        <label>1</label>
    </ligand>
</feature>
<feature type="binding site" evidence="1">
    <location>
        <position position="164"/>
    </location>
    <ligand>
        <name>Zn(2+)</name>
        <dbReference type="ChEBI" id="CHEBI:29105"/>
        <label>2</label>
    </ligand>
</feature>
<feature type="binding site" evidence="1">
    <location>
        <position position="167"/>
    </location>
    <ligand>
        <name>Zn(2+)</name>
        <dbReference type="ChEBI" id="CHEBI:29105"/>
        <label>2</label>
    </ligand>
</feature>
<feature type="binding site" evidence="1">
    <location>
        <position position="186"/>
    </location>
    <ligand>
        <name>Zn(2+)</name>
        <dbReference type="ChEBI" id="CHEBI:29105"/>
        <label>2</label>
    </ligand>
</feature>
<feature type="binding site" evidence="1">
    <location>
        <position position="189"/>
    </location>
    <ligand>
        <name>Zn(2+)</name>
        <dbReference type="ChEBI" id="CHEBI:29105"/>
        <label>2</label>
    </ligand>
</feature>
<feature type="binding site" evidence="1">
    <location>
        <position position="200"/>
    </location>
    <ligand>
        <name>Zn(2+)</name>
        <dbReference type="ChEBI" id="CHEBI:29105"/>
        <label>1</label>
    </ligand>
</feature>
<feature type="binding site" evidence="1">
    <location>
        <position position="203"/>
    </location>
    <ligand>
        <name>Zn(2+)</name>
        <dbReference type="ChEBI" id="CHEBI:29105"/>
        <label>1</label>
    </ligand>
</feature>